<reference key="1">
    <citation type="journal article" date="2007" name="PLoS Genet.">
        <title>Patterns and implications of gene gain and loss in the evolution of Prochlorococcus.</title>
        <authorList>
            <person name="Kettler G.C."/>
            <person name="Martiny A.C."/>
            <person name="Huang K."/>
            <person name="Zucker J."/>
            <person name="Coleman M.L."/>
            <person name="Rodrigue S."/>
            <person name="Chen F."/>
            <person name="Lapidus A."/>
            <person name="Ferriera S."/>
            <person name="Johnson J."/>
            <person name="Steglich C."/>
            <person name="Church G.M."/>
            <person name="Richardson P."/>
            <person name="Chisholm S.W."/>
        </authorList>
    </citation>
    <scope>NUCLEOTIDE SEQUENCE [LARGE SCALE GENOMIC DNA]</scope>
    <source>
        <strain>NATL1A</strain>
    </source>
</reference>
<accession>A2C552</accession>
<keyword id="KW-0143">Chaperone</keyword>
<keyword id="KW-0963">Cytoplasm</keyword>
<keyword id="KW-0690">Ribosome biogenesis</keyword>
<keyword id="KW-0698">rRNA processing</keyword>
<feature type="chain" id="PRO_1000001211" description="Ribosome maturation factor RimM">
    <location>
        <begin position="1"/>
        <end position="176"/>
    </location>
</feature>
<feature type="domain" description="PRC barrel" evidence="1">
    <location>
        <begin position="100"/>
        <end position="173"/>
    </location>
</feature>
<sequence>MFEKDKWMSIGEIVAPQGLRGDLRIKPSSDFPERFTKPGKRWIQKTDELPTEIKLTKGKLIPGKSIYVLSIEGVSTRSSAEEIIGWKLVIPIDSRPMLSKDEYHYHDLIGLEARSGPSKALIGYVTDLIKGGNDLLEIELVEGKKVLVPFVKEIVPEIEIKEKWLLINPPPGLLEL</sequence>
<evidence type="ECO:0000255" key="1">
    <source>
        <dbReference type="HAMAP-Rule" id="MF_00014"/>
    </source>
</evidence>
<dbReference type="EMBL" id="CP000553">
    <property type="protein sequence ID" value="ABM76612.1"/>
    <property type="molecule type" value="Genomic_DNA"/>
</dbReference>
<dbReference type="RefSeq" id="WP_011824561.1">
    <property type="nucleotide sequence ID" value="NC_008819.1"/>
</dbReference>
<dbReference type="SMR" id="A2C552"/>
<dbReference type="KEGG" id="pme:NATL1_20561"/>
<dbReference type="eggNOG" id="COG0806">
    <property type="taxonomic scope" value="Bacteria"/>
</dbReference>
<dbReference type="HOGENOM" id="CLU_077636_3_0_3"/>
<dbReference type="Proteomes" id="UP000002592">
    <property type="component" value="Chromosome"/>
</dbReference>
<dbReference type="GO" id="GO:0005737">
    <property type="term" value="C:cytoplasm"/>
    <property type="evidence" value="ECO:0007669"/>
    <property type="project" value="UniProtKB-SubCell"/>
</dbReference>
<dbReference type="GO" id="GO:0005840">
    <property type="term" value="C:ribosome"/>
    <property type="evidence" value="ECO:0007669"/>
    <property type="project" value="InterPro"/>
</dbReference>
<dbReference type="GO" id="GO:0043022">
    <property type="term" value="F:ribosome binding"/>
    <property type="evidence" value="ECO:0007669"/>
    <property type="project" value="InterPro"/>
</dbReference>
<dbReference type="GO" id="GO:0042274">
    <property type="term" value="P:ribosomal small subunit biogenesis"/>
    <property type="evidence" value="ECO:0007669"/>
    <property type="project" value="UniProtKB-UniRule"/>
</dbReference>
<dbReference type="GO" id="GO:0006364">
    <property type="term" value="P:rRNA processing"/>
    <property type="evidence" value="ECO:0007669"/>
    <property type="project" value="UniProtKB-UniRule"/>
</dbReference>
<dbReference type="Gene3D" id="2.30.30.240">
    <property type="entry name" value="PRC-barrel domain"/>
    <property type="match status" value="1"/>
</dbReference>
<dbReference type="Gene3D" id="2.40.30.60">
    <property type="entry name" value="RimM"/>
    <property type="match status" value="1"/>
</dbReference>
<dbReference type="HAMAP" id="MF_00014">
    <property type="entry name" value="Ribosome_mat_RimM"/>
    <property type="match status" value="1"/>
</dbReference>
<dbReference type="InterPro" id="IPR011033">
    <property type="entry name" value="PRC_barrel-like_sf"/>
</dbReference>
<dbReference type="InterPro" id="IPR056792">
    <property type="entry name" value="PRC_RimM"/>
</dbReference>
<dbReference type="InterPro" id="IPR011961">
    <property type="entry name" value="RimM"/>
</dbReference>
<dbReference type="InterPro" id="IPR002676">
    <property type="entry name" value="RimM_N"/>
</dbReference>
<dbReference type="InterPro" id="IPR036976">
    <property type="entry name" value="RimM_N_sf"/>
</dbReference>
<dbReference type="InterPro" id="IPR009000">
    <property type="entry name" value="Transl_B-barrel_sf"/>
</dbReference>
<dbReference type="NCBIfam" id="TIGR02273">
    <property type="entry name" value="16S_RimM"/>
    <property type="match status" value="1"/>
</dbReference>
<dbReference type="PANTHER" id="PTHR33692">
    <property type="entry name" value="RIBOSOME MATURATION FACTOR RIMM"/>
    <property type="match status" value="1"/>
</dbReference>
<dbReference type="PANTHER" id="PTHR33692:SF1">
    <property type="entry name" value="RIBOSOME MATURATION FACTOR RIMM"/>
    <property type="match status" value="1"/>
</dbReference>
<dbReference type="Pfam" id="PF24986">
    <property type="entry name" value="PRC_RimM"/>
    <property type="match status" value="1"/>
</dbReference>
<dbReference type="Pfam" id="PF01782">
    <property type="entry name" value="RimM"/>
    <property type="match status" value="1"/>
</dbReference>
<dbReference type="SUPFAM" id="SSF50346">
    <property type="entry name" value="PRC-barrel domain"/>
    <property type="match status" value="1"/>
</dbReference>
<dbReference type="SUPFAM" id="SSF50447">
    <property type="entry name" value="Translation proteins"/>
    <property type="match status" value="1"/>
</dbReference>
<gene>
    <name evidence="1" type="primary">rimM</name>
    <name type="ordered locus">NATL1_20561</name>
</gene>
<organism>
    <name type="scientific">Prochlorococcus marinus (strain NATL1A)</name>
    <dbReference type="NCBI Taxonomy" id="167555"/>
    <lineage>
        <taxon>Bacteria</taxon>
        <taxon>Bacillati</taxon>
        <taxon>Cyanobacteriota</taxon>
        <taxon>Cyanophyceae</taxon>
        <taxon>Synechococcales</taxon>
        <taxon>Prochlorococcaceae</taxon>
        <taxon>Prochlorococcus</taxon>
    </lineage>
</organism>
<proteinExistence type="inferred from homology"/>
<name>RIMM_PROM1</name>
<comment type="function">
    <text evidence="1">An accessory protein needed during the final step in the assembly of 30S ribosomal subunit, possibly for assembly of the head region. Essential for efficient processing of 16S rRNA. May be needed both before and after RbfA during the maturation of 16S rRNA. It has affinity for free ribosomal 30S subunits but not for 70S ribosomes.</text>
</comment>
<comment type="subunit">
    <text evidence="1">Binds ribosomal protein uS19.</text>
</comment>
<comment type="subcellular location">
    <subcellularLocation>
        <location evidence="1">Cytoplasm</location>
    </subcellularLocation>
</comment>
<comment type="domain">
    <text evidence="1">The PRC barrel domain binds ribosomal protein uS19.</text>
</comment>
<comment type="similarity">
    <text evidence="1">Belongs to the RimM family.</text>
</comment>
<protein>
    <recommendedName>
        <fullName evidence="1">Ribosome maturation factor RimM</fullName>
    </recommendedName>
</protein>